<accession>Q8YLJ8</accession>
<gene>
    <name evidence="1" type="primary">rplK</name>
    <name evidence="1" type="synonym">rpl11</name>
    <name type="ordered locus">alr5300</name>
</gene>
<name>RL11_NOSS1</name>
<evidence type="ECO:0000255" key="1">
    <source>
        <dbReference type="HAMAP-Rule" id="MF_00736"/>
    </source>
</evidence>
<evidence type="ECO:0000305" key="2"/>
<dbReference type="EMBL" id="BA000019">
    <property type="protein sequence ID" value="BAB76999.1"/>
    <property type="molecule type" value="Genomic_DNA"/>
</dbReference>
<dbReference type="PIR" id="AD2468">
    <property type="entry name" value="AD2468"/>
</dbReference>
<dbReference type="RefSeq" id="WP_010999424.1">
    <property type="nucleotide sequence ID" value="NZ_RSCN01000005.1"/>
</dbReference>
<dbReference type="SMR" id="Q8YLJ8"/>
<dbReference type="STRING" id="103690.gene:10497361"/>
<dbReference type="GeneID" id="58725243"/>
<dbReference type="KEGG" id="ana:alr5300"/>
<dbReference type="eggNOG" id="COG0080">
    <property type="taxonomic scope" value="Bacteria"/>
</dbReference>
<dbReference type="OrthoDB" id="9802408at2"/>
<dbReference type="Proteomes" id="UP000002483">
    <property type="component" value="Chromosome"/>
</dbReference>
<dbReference type="GO" id="GO:0022625">
    <property type="term" value="C:cytosolic large ribosomal subunit"/>
    <property type="evidence" value="ECO:0007669"/>
    <property type="project" value="TreeGrafter"/>
</dbReference>
<dbReference type="GO" id="GO:0070180">
    <property type="term" value="F:large ribosomal subunit rRNA binding"/>
    <property type="evidence" value="ECO:0007669"/>
    <property type="project" value="UniProtKB-UniRule"/>
</dbReference>
<dbReference type="GO" id="GO:0003735">
    <property type="term" value="F:structural constituent of ribosome"/>
    <property type="evidence" value="ECO:0007669"/>
    <property type="project" value="InterPro"/>
</dbReference>
<dbReference type="GO" id="GO:0006412">
    <property type="term" value="P:translation"/>
    <property type="evidence" value="ECO:0007669"/>
    <property type="project" value="UniProtKB-UniRule"/>
</dbReference>
<dbReference type="CDD" id="cd00349">
    <property type="entry name" value="Ribosomal_L11"/>
    <property type="match status" value="1"/>
</dbReference>
<dbReference type="FunFam" id="1.10.10.250:FF:000001">
    <property type="entry name" value="50S ribosomal protein L11"/>
    <property type="match status" value="1"/>
</dbReference>
<dbReference type="FunFam" id="3.30.1550.10:FF:000001">
    <property type="entry name" value="50S ribosomal protein L11"/>
    <property type="match status" value="1"/>
</dbReference>
<dbReference type="Gene3D" id="1.10.10.250">
    <property type="entry name" value="Ribosomal protein L11, C-terminal domain"/>
    <property type="match status" value="1"/>
</dbReference>
<dbReference type="Gene3D" id="3.30.1550.10">
    <property type="entry name" value="Ribosomal protein L11/L12, N-terminal domain"/>
    <property type="match status" value="1"/>
</dbReference>
<dbReference type="HAMAP" id="MF_00736">
    <property type="entry name" value="Ribosomal_uL11"/>
    <property type="match status" value="1"/>
</dbReference>
<dbReference type="InterPro" id="IPR000911">
    <property type="entry name" value="Ribosomal_uL11"/>
</dbReference>
<dbReference type="InterPro" id="IPR006519">
    <property type="entry name" value="Ribosomal_uL11_bac-typ"/>
</dbReference>
<dbReference type="InterPro" id="IPR020783">
    <property type="entry name" value="Ribosomal_uL11_C"/>
</dbReference>
<dbReference type="InterPro" id="IPR036769">
    <property type="entry name" value="Ribosomal_uL11_C_sf"/>
</dbReference>
<dbReference type="InterPro" id="IPR020785">
    <property type="entry name" value="Ribosomal_uL11_CS"/>
</dbReference>
<dbReference type="InterPro" id="IPR020784">
    <property type="entry name" value="Ribosomal_uL11_N"/>
</dbReference>
<dbReference type="InterPro" id="IPR036796">
    <property type="entry name" value="Ribosomal_uL11_N_sf"/>
</dbReference>
<dbReference type="NCBIfam" id="TIGR01632">
    <property type="entry name" value="L11_bact"/>
    <property type="match status" value="1"/>
</dbReference>
<dbReference type="PANTHER" id="PTHR11661">
    <property type="entry name" value="60S RIBOSOMAL PROTEIN L12"/>
    <property type="match status" value="1"/>
</dbReference>
<dbReference type="PANTHER" id="PTHR11661:SF1">
    <property type="entry name" value="LARGE RIBOSOMAL SUBUNIT PROTEIN UL11M"/>
    <property type="match status" value="1"/>
</dbReference>
<dbReference type="Pfam" id="PF00298">
    <property type="entry name" value="Ribosomal_L11"/>
    <property type="match status" value="1"/>
</dbReference>
<dbReference type="Pfam" id="PF03946">
    <property type="entry name" value="Ribosomal_L11_N"/>
    <property type="match status" value="1"/>
</dbReference>
<dbReference type="SMART" id="SM00649">
    <property type="entry name" value="RL11"/>
    <property type="match status" value="1"/>
</dbReference>
<dbReference type="SUPFAM" id="SSF54747">
    <property type="entry name" value="Ribosomal L11/L12e N-terminal domain"/>
    <property type="match status" value="1"/>
</dbReference>
<dbReference type="SUPFAM" id="SSF46906">
    <property type="entry name" value="Ribosomal protein L11, C-terminal domain"/>
    <property type="match status" value="1"/>
</dbReference>
<dbReference type="PROSITE" id="PS00359">
    <property type="entry name" value="RIBOSOMAL_L11"/>
    <property type="match status" value="1"/>
</dbReference>
<keyword id="KW-0488">Methylation</keyword>
<keyword id="KW-1185">Reference proteome</keyword>
<keyword id="KW-0687">Ribonucleoprotein</keyword>
<keyword id="KW-0689">Ribosomal protein</keyword>
<keyword id="KW-0694">RNA-binding</keyword>
<keyword id="KW-0699">rRNA-binding</keyword>
<protein>
    <recommendedName>
        <fullName evidence="1">Large ribosomal subunit protein uL11</fullName>
    </recommendedName>
    <alternativeName>
        <fullName evidence="2">50S ribosomal protein L11</fullName>
    </alternativeName>
</protein>
<feature type="chain" id="PRO_0000104233" description="Large ribosomal subunit protein uL11">
    <location>
        <begin position="1"/>
        <end position="141"/>
    </location>
</feature>
<reference key="1">
    <citation type="journal article" date="2001" name="DNA Res.">
        <title>Complete genomic sequence of the filamentous nitrogen-fixing cyanobacterium Anabaena sp. strain PCC 7120.</title>
        <authorList>
            <person name="Kaneko T."/>
            <person name="Nakamura Y."/>
            <person name="Wolk C.P."/>
            <person name="Kuritz T."/>
            <person name="Sasamoto S."/>
            <person name="Watanabe A."/>
            <person name="Iriguchi M."/>
            <person name="Ishikawa A."/>
            <person name="Kawashima K."/>
            <person name="Kimura T."/>
            <person name="Kishida Y."/>
            <person name="Kohara M."/>
            <person name="Matsumoto M."/>
            <person name="Matsuno A."/>
            <person name="Muraki A."/>
            <person name="Nakazaki N."/>
            <person name="Shimpo S."/>
            <person name="Sugimoto M."/>
            <person name="Takazawa M."/>
            <person name="Yamada M."/>
            <person name="Yasuda M."/>
            <person name="Tabata S."/>
        </authorList>
    </citation>
    <scope>NUCLEOTIDE SEQUENCE [LARGE SCALE GENOMIC DNA]</scope>
    <source>
        <strain>PCC 7120 / SAG 25.82 / UTEX 2576</strain>
    </source>
</reference>
<sequence length="141" mass="14987">MAKKVVAVIKLALNAGKANPAPPVGPALGQHGVNIMMFCKEYNAKTADQAGMVIPVEISVYEDRSFTFVLKTPPASVLIRKAAKIERGSNEPNKKKVGTITTAQLREIAQTKLPDLNANDIDAAMKIVAGTARNMGVTVTD</sequence>
<comment type="function">
    <text evidence="1">Forms part of the ribosomal stalk which helps the ribosome interact with GTP-bound translation factors.</text>
</comment>
<comment type="subunit">
    <text evidence="1">Part of the ribosomal stalk of the 50S ribosomal subunit. Interacts with L10 and the large rRNA to form the base of the stalk. L10 forms an elongated spine to which L12 dimers bind in a sequential fashion forming a multimeric L10(L12)X complex.</text>
</comment>
<comment type="PTM">
    <text evidence="1">One or more lysine residues are methylated.</text>
</comment>
<comment type="similarity">
    <text evidence="1">Belongs to the universal ribosomal protein uL11 family.</text>
</comment>
<proteinExistence type="inferred from homology"/>
<organism>
    <name type="scientific">Nostoc sp. (strain PCC 7120 / SAG 25.82 / UTEX 2576)</name>
    <dbReference type="NCBI Taxonomy" id="103690"/>
    <lineage>
        <taxon>Bacteria</taxon>
        <taxon>Bacillati</taxon>
        <taxon>Cyanobacteriota</taxon>
        <taxon>Cyanophyceae</taxon>
        <taxon>Nostocales</taxon>
        <taxon>Nostocaceae</taxon>
        <taxon>Nostoc</taxon>
    </lineage>
</organism>